<name>IDHP_MOUSE</name>
<protein>
    <recommendedName>
        <fullName>Isocitrate dehydrogenase [NADP], mitochondrial</fullName>
        <shortName>IDH</shortName>
        <ecNumber evidence="8">1.1.1.42</ecNumber>
    </recommendedName>
    <alternativeName>
        <fullName>ICD-M</fullName>
    </alternativeName>
    <alternativeName>
        <fullName>IDP</fullName>
    </alternativeName>
    <alternativeName>
        <fullName>NADP(+)-specific ICDH</fullName>
    </alternativeName>
    <alternativeName>
        <fullName>Oxalosuccinate decarboxylase</fullName>
    </alternativeName>
</protein>
<accession>P54071</accession>
<accession>Q8C2R9</accession>
<accession>Q9EQK1</accession>
<proteinExistence type="evidence at protein level"/>
<keyword id="KW-0002">3D-structure</keyword>
<keyword id="KW-0007">Acetylation</keyword>
<keyword id="KW-0903">Direct protein sequencing</keyword>
<keyword id="KW-0329">Glyoxylate bypass</keyword>
<keyword id="KW-0460">Magnesium</keyword>
<keyword id="KW-0464">Manganese</keyword>
<keyword id="KW-0479">Metal-binding</keyword>
<keyword id="KW-0496">Mitochondrion</keyword>
<keyword id="KW-0521">NADP</keyword>
<keyword id="KW-0560">Oxidoreductase</keyword>
<keyword id="KW-1185">Reference proteome</keyword>
<keyword id="KW-0346">Stress response</keyword>
<keyword id="KW-0809">Transit peptide</keyword>
<keyword id="KW-0816">Tricarboxylic acid cycle</keyword>
<dbReference type="EC" id="1.1.1.42" evidence="8"/>
<dbReference type="EMBL" id="U51167">
    <property type="protein sequence ID" value="AAC52473.1"/>
    <property type="status" value="ALT_FRAME"/>
    <property type="molecule type" value="mRNA"/>
</dbReference>
<dbReference type="EMBL" id="AF212319">
    <property type="protein sequence ID" value="AAG43538.1"/>
    <property type="molecule type" value="mRNA"/>
</dbReference>
<dbReference type="EMBL" id="AK088110">
    <property type="protein sequence ID" value="BAC40149.1"/>
    <property type="molecule type" value="mRNA"/>
</dbReference>
<dbReference type="EMBL" id="AK145753">
    <property type="protein sequence ID" value="BAE26628.1"/>
    <property type="molecule type" value="mRNA"/>
</dbReference>
<dbReference type="EMBL" id="AK161640">
    <property type="protein sequence ID" value="BAE36505.1"/>
    <property type="molecule type" value="mRNA"/>
</dbReference>
<dbReference type="EMBL" id="AK169395">
    <property type="protein sequence ID" value="BAE41142.1"/>
    <property type="molecule type" value="mRNA"/>
</dbReference>
<dbReference type="EMBL" id="BC060030">
    <property type="protein sequence ID" value="AAH60030.1"/>
    <property type="molecule type" value="mRNA"/>
</dbReference>
<dbReference type="CCDS" id="CCDS39994.1"/>
<dbReference type="RefSeq" id="NP_766599.2">
    <property type="nucleotide sequence ID" value="NM_173011.2"/>
</dbReference>
<dbReference type="PDB" id="5H3E">
    <property type="method" value="X-ray"/>
    <property type="resolution" value="2.21 A"/>
    <property type="chains" value="A/B=40-452"/>
</dbReference>
<dbReference type="PDB" id="5H3F">
    <property type="method" value="X-ray"/>
    <property type="resolution" value="3.29 A"/>
    <property type="chains" value="A/B=40-452"/>
</dbReference>
<dbReference type="PDBsum" id="5H3E"/>
<dbReference type="PDBsum" id="5H3F"/>
<dbReference type="SMR" id="P54071"/>
<dbReference type="BioGRID" id="234733">
    <property type="interactions" value="50"/>
</dbReference>
<dbReference type="FunCoup" id="P54071">
    <property type="interactions" value="2139"/>
</dbReference>
<dbReference type="IntAct" id="P54071">
    <property type="interactions" value="5"/>
</dbReference>
<dbReference type="MINT" id="P54071"/>
<dbReference type="STRING" id="10090.ENSMUSP00000103007"/>
<dbReference type="ChEMBL" id="CHEMBL2176829"/>
<dbReference type="GlyGen" id="P54071">
    <property type="glycosylation" value="1 site, 1 O-linked glycan (1 site)"/>
</dbReference>
<dbReference type="iPTMnet" id="P54071"/>
<dbReference type="MetOSite" id="P54071"/>
<dbReference type="PhosphoSitePlus" id="P54071"/>
<dbReference type="SwissPalm" id="P54071"/>
<dbReference type="jPOST" id="P54071"/>
<dbReference type="PaxDb" id="10090-ENSMUSP00000103007"/>
<dbReference type="PeptideAtlas" id="P54071"/>
<dbReference type="ProteomicsDB" id="267192"/>
<dbReference type="Pumba" id="P54071"/>
<dbReference type="Antibodypedia" id="15858">
    <property type="antibodies" value="480 antibodies from 44 providers"/>
</dbReference>
<dbReference type="DNASU" id="269951"/>
<dbReference type="Ensembl" id="ENSMUST00000107384.10">
    <property type="protein sequence ID" value="ENSMUSP00000103007.4"/>
    <property type="gene ID" value="ENSMUSG00000030541.17"/>
</dbReference>
<dbReference type="GeneID" id="269951"/>
<dbReference type="KEGG" id="mmu:269951"/>
<dbReference type="UCSC" id="uc009hzm.2">
    <property type="organism name" value="mouse"/>
</dbReference>
<dbReference type="AGR" id="MGI:96414"/>
<dbReference type="CTD" id="3418"/>
<dbReference type="MGI" id="MGI:96414">
    <property type="gene designation" value="Idh2"/>
</dbReference>
<dbReference type="VEuPathDB" id="HostDB:ENSMUSG00000030541"/>
<dbReference type="eggNOG" id="KOG1526">
    <property type="taxonomic scope" value="Eukaryota"/>
</dbReference>
<dbReference type="GeneTree" id="ENSGT00390000012547"/>
<dbReference type="HOGENOM" id="CLU_023296_1_1_1"/>
<dbReference type="InParanoid" id="P54071"/>
<dbReference type="OMA" id="ENYETKW"/>
<dbReference type="OrthoDB" id="248923at2759"/>
<dbReference type="PhylomeDB" id="P54071"/>
<dbReference type="TreeFam" id="TF300428"/>
<dbReference type="BRENDA" id="1.1.1.42">
    <property type="organism ID" value="3474"/>
</dbReference>
<dbReference type="Reactome" id="R-MMU-2151201">
    <property type="pathway name" value="Transcriptional activation of mitochondrial biogenesis"/>
</dbReference>
<dbReference type="Reactome" id="R-MMU-71403">
    <property type="pathway name" value="Citric acid cycle (TCA cycle)"/>
</dbReference>
<dbReference type="Reactome" id="R-MMU-9837999">
    <property type="pathway name" value="Mitochondrial protein degradation"/>
</dbReference>
<dbReference type="Reactome" id="R-MMU-9854311">
    <property type="pathway name" value="Maturation of TCA enzymes and regulation of TCA cycle"/>
</dbReference>
<dbReference type="BioGRID-ORCS" id="269951">
    <property type="hits" value="3 hits in 78 CRISPR screens"/>
</dbReference>
<dbReference type="ChiTaRS" id="Idh2">
    <property type="organism name" value="mouse"/>
</dbReference>
<dbReference type="PRO" id="PR:P54071"/>
<dbReference type="Proteomes" id="UP000000589">
    <property type="component" value="Chromosome 7"/>
</dbReference>
<dbReference type="RNAct" id="P54071">
    <property type="molecule type" value="protein"/>
</dbReference>
<dbReference type="Bgee" id="ENSMUSG00000030541">
    <property type="expression patterns" value="Expressed in heart right ventricle and 278 other cell types or tissues"/>
</dbReference>
<dbReference type="ExpressionAtlas" id="P54071">
    <property type="expression patterns" value="baseline and differential"/>
</dbReference>
<dbReference type="GO" id="GO:0005829">
    <property type="term" value="C:cytosol"/>
    <property type="evidence" value="ECO:0000314"/>
    <property type="project" value="MGI"/>
</dbReference>
<dbReference type="GO" id="GO:0005743">
    <property type="term" value="C:mitochondrial inner membrane"/>
    <property type="evidence" value="ECO:0007005"/>
    <property type="project" value="MGI"/>
</dbReference>
<dbReference type="GO" id="GO:0005739">
    <property type="term" value="C:mitochondrion"/>
    <property type="evidence" value="ECO:0007005"/>
    <property type="project" value="MGI"/>
</dbReference>
<dbReference type="GO" id="GO:0005777">
    <property type="term" value="C:peroxisome"/>
    <property type="evidence" value="ECO:0000314"/>
    <property type="project" value="MGI"/>
</dbReference>
<dbReference type="GO" id="GO:0004450">
    <property type="term" value="F:isocitrate dehydrogenase (NADP+) activity"/>
    <property type="evidence" value="ECO:0000314"/>
    <property type="project" value="MGI"/>
</dbReference>
<dbReference type="GO" id="GO:0000287">
    <property type="term" value="F:magnesium ion binding"/>
    <property type="evidence" value="ECO:0000250"/>
    <property type="project" value="UniProtKB"/>
</dbReference>
<dbReference type="GO" id="GO:0051287">
    <property type="term" value="F:NAD binding"/>
    <property type="evidence" value="ECO:0007669"/>
    <property type="project" value="InterPro"/>
</dbReference>
<dbReference type="GO" id="GO:0006103">
    <property type="term" value="P:2-oxoglutarate metabolic process"/>
    <property type="evidence" value="ECO:0000250"/>
    <property type="project" value="UniProtKB"/>
</dbReference>
<dbReference type="GO" id="GO:0006097">
    <property type="term" value="P:glyoxylate cycle"/>
    <property type="evidence" value="ECO:0007669"/>
    <property type="project" value="UniProtKB-KW"/>
</dbReference>
<dbReference type="GO" id="GO:0006102">
    <property type="term" value="P:isocitrate metabolic process"/>
    <property type="evidence" value="ECO:0000250"/>
    <property type="project" value="UniProtKB"/>
</dbReference>
<dbReference type="GO" id="GO:0006741">
    <property type="term" value="P:NADP biosynthetic process"/>
    <property type="evidence" value="ECO:0007669"/>
    <property type="project" value="Ensembl"/>
</dbReference>
<dbReference type="GO" id="GO:1903976">
    <property type="term" value="P:negative regulation of glial cell migration"/>
    <property type="evidence" value="ECO:0007669"/>
    <property type="project" value="Ensembl"/>
</dbReference>
<dbReference type="GO" id="GO:0060253">
    <property type="term" value="P:negative regulation of glial cell proliferation"/>
    <property type="evidence" value="ECO:0007669"/>
    <property type="project" value="Ensembl"/>
</dbReference>
<dbReference type="GO" id="GO:1904465">
    <property type="term" value="P:negative regulation of matrix metallopeptidase secretion"/>
    <property type="evidence" value="ECO:0007669"/>
    <property type="project" value="Ensembl"/>
</dbReference>
<dbReference type="GO" id="GO:0006099">
    <property type="term" value="P:tricarboxylic acid cycle"/>
    <property type="evidence" value="ECO:0007669"/>
    <property type="project" value="UniProtKB-KW"/>
</dbReference>
<dbReference type="FunFam" id="3.40.718.10:FF:000002">
    <property type="entry name" value="Isocitrate dehydrogenase [NADP]"/>
    <property type="match status" value="1"/>
</dbReference>
<dbReference type="Gene3D" id="3.40.718.10">
    <property type="entry name" value="Isopropylmalate Dehydrogenase"/>
    <property type="match status" value="1"/>
</dbReference>
<dbReference type="InterPro" id="IPR019818">
    <property type="entry name" value="IsoCit/isopropylmalate_DH_CS"/>
</dbReference>
<dbReference type="InterPro" id="IPR004790">
    <property type="entry name" value="Isocitrate_DH_NADP"/>
</dbReference>
<dbReference type="InterPro" id="IPR024084">
    <property type="entry name" value="IsoPropMal-DH-like_dom"/>
</dbReference>
<dbReference type="NCBIfam" id="TIGR00127">
    <property type="entry name" value="nadp_idh_euk"/>
    <property type="match status" value="1"/>
</dbReference>
<dbReference type="NCBIfam" id="NF006156">
    <property type="entry name" value="PRK08299.1"/>
    <property type="match status" value="1"/>
</dbReference>
<dbReference type="PANTHER" id="PTHR11822:SF21">
    <property type="entry name" value="ISOCITRATE DEHYDROGENASE [NADP], MITOCHONDRIAL"/>
    <property type="match status" value="1"/>
</dbReference>
<dbReference type="PANTHER" id="PTHR11822">
    <property type="entry name" value="NADP-SPECIFIC ISOCITRATE DEHYDROGENASE"/>
    <property type="match status" value="1"/>
</dbReference>
<dbReference type="Pfam" id="PF00180">
    <property type="entry name" value="Iso_dh"/>
    <property type="match status" value="1"/>
</dbReference>
<dbReference type="PIRSF" id="PIRSF000108">
    <property type="entry name" value="IDH_NADP"/>
    <property type="match status" value="1"/>
</dbReference>
<dbReference type="SMART" id="SM01329">
    <property type="entry name" value="Iso_dh"/>
    <property type="match status" value="1"/>
</dbReference>
<dbReference type="SUPFAM" id="SSF53659">
    <property type="entry name" value="Isocitrate/Isopropylmalate dehydrogenase-like"/>
    <property type="match status" value="1"/>
</dbReference>
<dbReference type="PROSITE" id="PS00470">
    <property type="entry name" value="IDH_IMDH"/>
    <property type="match status" value="1"/>
</dbReference>
<gene>
    <name type="primary">Idh2</name>
</gene>
<reference key="1">
    <citation type="journal article" date="1996" name="J. Cell. Biochem.">
        <title>Molecular cloning of the cDNA of mouse mitochondrial NADP-dependent isocitrate dehydrogenase and the expression of the gene during lymphocyte activation.</title>
        <authorList>
            <person name="Yang L."/>
            <person name="Luo H."/>
            <person name="Vinay P."/>
            <person name="Wu J."/>
        </authorList>
    </citation>
    <scope>NUCLEOTIDE SEQUENCE [MRNA]</scope>
    <scope>FUNCTION</scope>
    <scope>CATALYTIC ACTIVITY</scope>
    <scope>SUBCELLULAR LOCATION</scope>
    <scope>TISSUE SPECIFICITY</scope>
    <scope>DEVELOPMENTAL STAGE</scope>
    <source>
        <strain>BALB/cJ</strain>
        <tissue>Heart</tissue>
    </source>
</reference>
<reference key="2">
    <citation type="journal article" date="2001" name="J. Biol. Chem.">
        <title>Control of mitochondrial redox balance and cellular defense against oxidative damage by mitochondrial NADP+-dependent isocitrate dehydrogenase.</title>
        <authorList>
            <person name="Jo S.-H."/>
            <person name="Son M.-K."/>
            <person name="Koh H.-J."/>
            <person name="Lee S.-M."/>
            <person name="Song I.-H."/>
            <person name="Kim Y.-O."/>
            <person name="Lee Y.-S."/>
            <person name="Jeong K.-S."/>
            <person name="Kim W.B."/>
            <person name="Park J.-W."/>
            <person name="Song B.J."/>
            <person name="Huhe T.-L."/>
        </authorList>
    </citation>
    <scope>NUCLEOTIDE SEQUENCE [MRNA]</scope>
    <scope>TISSUE SPECIFICITY</scope>
    <scope>INDUCTION</scope>
</reference>
<reference key="3">
    <citation type="journal article" date="2005" name="Science">
        <title>The transcriptional landscape of the mammalian genome.</title>
        <authorList>
            <person name="Carninci P."/>
            <person name="Kasukawa T."/>
            <person name="Katayama S."/>
            <person name="Gough J."/>
            <person name="Frith M.C."/>
            <person name="Maeda N."/>
            <person name="Oyama R."/>
            <person name="Ravasi T."/>
            <person name="Lenhard B."/>
            <person name="Wells C."/>
            <person name="Kodzius R."/>
            <person name="Shimokawa K."/>
            <person name="Bajic V.B."/>
            <person name="Brenner S.E."/>
            <person name="Batalov S."/>
            <person name="Forrest A.R."/>
            <person name="Zavolan M."/>
            <person name="Davis M.J."/>
            <person name="Wilming L.G."/>
            <person name="Aidinis V."/>
            <person name="Allen J.E."/>
            <person name="Ambesi-Impiombato A."/>
            <person name="Apweiler R."/>
            <person name="Aturaliya R.N."/>
            <person name="Bailey T.L."/>
            <person name="Bansal M."/>
            <person name="Baxter L."/>
            <person name="Beisel K.W."/>
            <person name="Bersano T."/>
            <person name="Bono H."/>
            <person name="Chalk A.M."/>
            <person name="Chiu K.P."/>
            <person name="Choudhary V."/>
            <person name="Christoffels A."/>
            <person name="Clutterbuck D.R."/>
            <person name="Crowe M.L."/>
            <person name="Dalla E."/>
            <person name="Dalrymple B.P."/>
            <person name="de Bono B."/>
            <person name="Della Gatta G."/>
            <person name="di Bernardo D."/>
            <person name="Down T."/>
            <person name="Engstrom P."/>
            <person name="Fagiolini M."/>
            <person name="Faulkner G."/>
            <person name="Fletcher C.F."/>
            <person name="Fukushima T."/>
            <person name="Furuno M."/>
            <person name="Futaki S."/>
            <person name="Gariboldi M."/>
            <person name="Georgii-Hemming P."/>
            <person name="Gingeras T.R."/>
            <person name="Gojobori T."/>
            <person name="Green R.E."/>
            <person name="Gustincich S."/>
            <person name="Harbers M."/>
            <person name="Hayashi Y."/>
            <person name="Hensch T.K."/>
            <person name="Hirokawa N."/>
            <person name="Hill D."/>
            <person name="Huminiecki L."/>
            <person name="Iacono M."/>
            <person name="Ikeo K."/>
            <person name="Iwama A."/>
            <person name="Ishikawa T."/>
            <person name="Jakt M."/>
            <person name="Kanapin A."/>
            <person name="Katoh M."/>
            <person name="Kawasawa Y."/>
            <person name="Kelso J."/>
            <person name="Kitamura H."/>
            <person name="Kitano H."/>
            <person name="Kollias G."/>
            <person name="Krishnan S.P."/>
            <person name="Kruger A."/>
            <person name="Kummerfeld S.K."/>
            <person name="Kurochkin I.V."/>
            <person name="Lareau L.F."/>
            <person name="Lazarevic D."/>
            <person name="Lipovich L."/>
            <person name="Liu J."/>
            <person name="Liuni S."/>
            <person name="McWilliam S."/>
            <person name="Madan Babu M."/>
            <person name="Madera M."/>
            <person name="Marchionni L."/>
            <person name="Matsuda H."/>
            <person name="Matsuzawa S."/>
            <person name="Miki H."/>
            <person name="Mignone F."/>
            <person name="Miyake S."/>
            <person name="Morris K."/>
            <person name="Mottagui-Tabar S."/>
            <person name="Mulder N."/>
            <person name="Nakano N."/>
            <person name="Nakauchi H."/>
            <person name="Ng P."/>
            <person name="Nilsson R."/>
            <person name="Nishiguchi S."/>
            <person name="Nishikawa S."/>
            <person name="Nori F."/>
            <person name="Ohara O."/>
            <person name="Okazaki Y."/>
            <person name="Orlando V."/>
            <person name="Pang K.C."/>
            <person name="Pavan W.J."/>
            <person name="Pavesi G."/>
            <person name="Pesole G."/>
            <person name="Petrovsky N."/>
            <person name="Piazza S."/>
            <person name="Reed J."/>
            <person name="Reid J.F."/>
            <person name="Ring B.Z."/>
            <person name="Ringwald M."/>
            <person name="Rost B."/>
            <person name="Ruan Y."/>
            <person name="Salzberg S.L."/>
            <person name="Sandelin A."/>
            <person name="Schneider C."/>
            <person name="Schoenbach C."/>
            <person name="Sekiguchi K."/>
            <person name="Semple C.A."/>
            <person name="Seno S."/>
            <person name="Sessa L."/>
            <person name="Sheng Y."/>
            <person name="Shibata Y."/>
            <person name="Shimada H."/>
            <person name="Shimada K."/>
            <person name="Silva D."/>
            <person name="Sinclair B."/>
            <person name="Sperling S."/>
            <person name="Stupka E."/>
            <person name="Sugiura K."/>
            <person name="Sultana R."/>
            <person name="Takenaka Y."/>
            <person name="Taki K."/>
            <person name="Tammoja K."/>
            <person name="Tan S.L."/>
            <person name="Tang S."/>
            <person name="Taylor M.S."/>
            <person name="Tegner J."/>
            <person name="Teichmann S.A."/>
            <person name="Ueda H.R."/>
            <person name="van Nimwegen E."/>
            <person name="Verardo R."/>
            <person name="Wei C.L."/>
            <person name="Yagi K."/>
            <person name="Yamanishi H."/>
            <person name="Zabarovsky E."/>
            <person name="Zhu S."/>
            <person name="Zimmer A."/>
            <person name="Hide W."/>
            <person name="Bult C."/>
            <person name="Grimmond S.M."/>
            <person name="Teasdale R.D."/>
            <person name="Liu E.T."/>
            <person name="Brusic V."/>
            <person name="Quackenbush J."/>
            <person name="Wahlestedt C."/>
            <person name="Mattick J.S."/>
            <person name="Hume D.A."/>
            <person name="Kai C."/>
            <person name="Sasaki D."/>
            <person name="Tomaru Y."/>
            <person name="Fukuda S."/>
            <person name="Kanamori-Katayama M."/>
            <person name="Suzuki M."/>
            <person name="Aoki J."/>
            <person name="Arakawa T."/>
            <person name="Iida J."/>
            <person name="Imamura K."/>
            <person name="Itoh M."/>
            <person name="Kato T."/>
            <person name="Kawaji H."/>
            <person name="Kawagashira N."/>
            <person name="Kawashima T."/>
            <person name="Kojima M."/>
            <person name="Kondo S."/>
            <person name="Konno H."/>
            <person name="Nakano K."/>
            <person name="Ninomiya N."/>
            <person name="Nishio T."/>
            <person name="Okada M."/>
            <person name="Plessy C."/>
            <person name="Shibata K."/>
            <person name="Shiraki T."/>
            <person name="Suzuki S."/>
            <person name="Tagami M."/>
            <person name="Waki K."/>
            <person name="Watahiki A."/>
            <person name="Okamura-Oho Y."/>
            <person name="Suzuki H."/>
            <person name="Kawai J."/>
            <person name="Hayashizaki Y."/>
        </authorList>
    </citation>
    <scope>NUCLEOTIDE SEQUENCE [LARGE SCALE MRNA]</scope>
    <source>
        <strain>C57BL/6J</strain>
        <strain>NOD</strain>
        <tissue>Embryo</tissue>
        <tissue>Heart</tissue>
        <tissue>Thymus</tissue>
    </source>
</reference>
<reference key="4">
    <citation type="journal article" date="2004" name="Genome Res.">
        <title>The status, quality, and expansion of the NIH full-length cDNA project: the Mammalian Gene Collection (MGC).</title>
        <authorList>
            <consortium name="The MGC Project Team"/>
        </authorList>
    </citation>
    <scope>NUCLEOTIDE SEQUENCE [LARGE SCALE MRNA]</scope>
    <source>
        <strain>FVB/N-3</strain>
        <tissue>Mammary tumor</tissue>
    </source>
</reference>
<reference key="5">
    <citation type="submission" date="2007-04" db="UniProtKB">
        <authorList>
            <person name="Lubec G."/>
            <person name="Kang S.U."/>
        </authorList>
    </citation>
    <scope>PROTEIN SEQUENCE OF 44-60 AND 81-89</scope>
    <scope>IDENTIFICATION BY MASS SPECTROMETRY</scope>
    <source>
        <strain>C57BL/6J</strain>
        <tissue>Brain</tissue>
    </source>
</reference>
<reference key="6">
    <citation type="journal article" date="2010" name="Cell">
        <title>A tissue-specific atlas of mouse protein phosphorylation and expression.</title>
        <authorList>
            <person name="Huttlin E.L."/>
            <person name="Jedrychowski M.P."/>
            <person name="Elias J.E."/>
            <person name="Goswami T."/>
            <person name="Rad R."/>
            <person name="Beausoleil S.A."/>
            <person name="Villen J."/>
            <person name="Haas W."/>
            <person name="Sowa M.E."/>
            <person name="Gygi S.P."/>
        </authorList>
    </citation>
    <scope>IDENTIFICATION BY MASS SPECTROMETRY [LARGE SCALE ANALYSIS]</scope>
    <source>
        <tissue>Brain</tissue>
        <tissue>Brown adipose tissue</tissue>
        <tissue>Heart</tissue>
        <tissue>Kidney</tissue>
        <tissue>Liver</tissue>
        <tissue>Lung</tissue>
        <tissue>Pancreas</tissue>
        <tissue>Spleen</tissue>
        <tissue>Testis</tissue>
    </source>
</reference>
<reference key="7">
    <citation type="journal article" date="2013" name="Mol. Cell">
        <title>SIRT5-mediated lysine desuccinylation impacts diverse metabolic pathways.</title>
        <authorList>
            <person name="Park J."/>
            <person name="Chen Y."/>
            <person name="Tishkoff D.X."/>
            <person name="Peng C."/>
            <person name="Tan M."/>
            <person name="Dai L."/>
            <person name="Xie Z."/>
            <person name="Zhang Y."/>
            <person name="Zwaans B.M."/>
            <person name="Skinner M.E."/>
            <person name="Lombard D.B."/>
            <person name="Zhao Y."/>
        </authorList>
    </citation>
    <scope>ACETYLATION [LARGE SCALE ANALYSIS] AT LYS-263</scope>
    <scope>SUCCINYLATION [LARGE SCALE ANALYSIS] AT LYS-80; LYS-106; LYS-166; LYS-180; LYS-193; LYS-256; LYS-282 AND LYS-384</scope>
    <scope>IDENTIFICATION BY MASS SPECTROMETRY [LARGE SCALE ANALYSIS]</scope>
    <source>
        <tissue>Embryonic fibroblast</tissue>
        <tissue>Liver</tissue>
    </source>
</reference>
<reference key="8">
    <citation type="journal article" date="2013" name="Proc. Natl. Acad. Sci. U.S.A.">
        <title>Label-free quantitative proteomics of the lysine acetylome in mitochondria identifies substrates of SIRT3 in metabolic pathways.</title>
        <authorList>
            <person name="Rardin M.J."/>
            <person name="Newman J.C."/>
            <person name="Held J.M."/>
            <person name="Cusack M.P."/>
            <person name="Sorensen D.J."/>
            <person name="Li B."/>
            <person name="Schilling B."/>
            <person name="Mooney S.D."/>
            <person name="Kahn C.R."/>
            <person name="Verdin E."/>
            <person name="Gibson B.W."/>
        </authorList>
    </citation>
    <scope>ACETYLATION [LARGE SCALE ANALYSIS] AT LYS-45; LYS-48; LYS-69; LYS-80; LYS-106; LYS-155; LYS-166; LYS-180; LYS-193; LYS-199; LYS-256; LYS-263; LYS-272; LYS-280; LYS-282; LYS-384; LYS-400 AND LYS-442</scope>
    <scope>IDENTIFICATION BY MASS SPECTROMETRY [LARGE SCALE ANALYSIS]</scope>
    <source>
        <tissue>Liver</tissue>
    </source>
</reference>
<comment type="function">
    <text evidence="6">Plays a role in intermediary metabolism and energy production (PubMed:8867815). It may tightly associate or interact with the pyruvate dehydrogenase complex (PubMed:8867815).</text>
</comment>
<comment type="catalytic activity">
    <reaction evidence="8">
        <text>D-threo-isocitrate + NADP(+) = 2-oxoglutarate + CO2 + NADPH</text>
        <dbReference type="Rhea" id="RHEA:19629"/>
        <dbReference type="ChEBI" id="CHEBI:15562"/>
        <dbReference type="ChEBI" id="CHEBI:16526"/>
        <dbReference type="ChEBI" id="CHEBI:16810"/>
        <dbReference type="ChEBI" id="CHEBI:57783"/>
        <dbReference type="ChEBI" id="CHEBI:58349"/>
        <dbReference type="EC" id="1.1.1.42"/>
    </reaction>
</comment>
<comment type="cofactor">
    <cofactor evidence="2">
        <name>Mg(2+)</name>
        <dbReference type="ChEBI" id="CHEBI:18420"/>
    </cofactor>
    <cofactor evidence="2">
        <name>Mn(2+)</name>
        <dbReference type="ChEBI" id="CHEBI:29035"/>
    </cofactor>
    <text evidence="2">Binds 1 Mg(2+) or Mn(2+) ion per subunit.</text>
</comment>
<comment type="subunit">
    <text evidence="2">Homodimer.</text>
</comment>
<comment type="subcellular location">
    <subcellularLocation>
        <location evidence="6">Mitochondrion</location>
    </subcellularLocation>
</comment>
<comment type="tissue specificity">
    <text evidence="5 6">Predominantly expressed in heart, liver and kidney (PubMed:11278619, PubMed:8867815). Expressed in activated B lymphocytes (PubMed:8867815).</text>
</comment>
<comment type="developmental stage">
    <text evidence="6">Up-regulated in activated B lymphocytes.</text>
</comment>
<comment type="induction">
    <text evidence="5">By oxidative stress (at protein level).</text>
</comment>
<comment type="PTM">
    <text evidence="3">Acetylation at Lys-413 dramatically reduces catalytic activity. Deacetylated by SIRT3 (By similarity).</text>
</comment>
<comment type="similarity">
    <text evidence="7">Belongs to the isocitrate and isopropylmalate dehydrogenases family.</text>
</comment>
<comment type="sequence caution" evidence="7">
    <conflict type="frameshift">
        <sequence resource="EMBL-CDS" id="AAC52473"/>
    </conflict>
</comment>
<organism>
    <name type="scientific">Mus musculus</name>
    <name type="common">Mouse</name>
    <dbReference type="NCBI Taxonomy" id="10090"/>
    <lineage>
        <taxon>Eukaryota</taxon>
        <taxon>Metazoa</taxon>
        <taxon>Chordata</taxon>
        <taxon>Craniata</taxon>
        <taxon>Vertebrata</taxon>
        <taxon>Euteleostomi</taxon>
        <taxon>Mammalia</taxon>
        <taxon>Eutheria</taxon>
        <taxon>Euarchontoglires</taxon>
        <taxon>Glires</taxon>
        <taxon>Rodentia</taxon>
        <taxon>Myomorpha</taxon>
        <taxon>Muroidea</taxon>
        <taxon>Muridae</taxon>
        <taxon>Murinae</taxon>
        <taxon>Mus</taxon>
        <taxon>Mus</taxon>
    </lineage>
</organism>
<evidence type="ECO:0000250" key="1">
    <source>
        <dbReference type="UniProtKB" id="O75874"/>
    </source>
</evidence>
<evidence type="ECO:0000250" key="2">
    <source>
        <dbReference type="UniProtKB" id="P33198"/>
    </source>
</evidence>
<evidence type="ECO:0000250" key="3">
    <source>
        <dbReference type="UniProtKB" id="P48735"/>
    </source>
</evidence>
<evidence type="ECO:0000250" key="4">
    <source>
        <dbReference type="UniProtKB" id="P56574"/>
    </source>
</evidence>
<evidence type="ECO:0000269" key="5">
    <source>
    </source>
</evidence>
<evidence type="ECO:0000269" key="6">
    <source>
    </source>
</evidence>
<evidence type="ECO:0000305" key="7"/>
<evidence type="ECO:0000305" key="8">
    <source>
    </source>
</evidence>
<evidence type="ECO:0007744" key="9">
    <source>
    </source>
</evidence>
<evidence type="ECO:0007744" key="10">
    <source>
    </source>
</evidence>
<evidence type="ECO:0007829" key="11">
    <source>
        <dbReference type="PDB" id="5H3E"/>
    </source>
</evidence>
<sequence>MAGYLRAVSSLCRASGSARTWAPAALTVPSWPEQPRRHYAEKRIKVEKPVVEMDGDEMTRIIWQFIKEKLILPHVDVQLKYFDLGLPNRDQTNDQVTIDSALATQKYSVAVKCATITPDEARVEEFKLKKMWKSPNGTIRNILGGTVFREPIICKNIPRLVPGWTKPITIGRHAHGDQYKATDFVVDRAGTFKLVFTPKDGSSAKEWEVYNFPAGGVGMGMYNTDESISGFAHSCFQYSIQKKWPLYLSTKNTILKAYDGRFKDIFQEIFDKHYKTDFDKNKIWYEHRLIDDMVAQVLKSSGGFVWACKNYDGDVQSDILAQGFGSLGLMTSVLVCPDGKTIEAEAAHGTVTRHYREHQKGRPTSTNPIASIFAWTRGLEHRGKLDGNQDLIRFAQTLEKVCVQTVESGAMTKDLAGCIHGLSNVKLNEHFLNTTDFLDTIKSNLDRALGKQ</sequence>
<feature type="transit peptide" description="Mitochondrion" evidence="4">
    <location>
        <begin position="1"/>
        <end position="39"/>
    </location>
</feature>
<feature type="chain" id="PRO_0000014421" description="Isocitrate dehydrogenase [NADP], mitochondrial">
    <location>
        <begin position="40"/>
        <end position="452"/>
    </location>
</feature>
<feature type="binding site" evidence="1">
    <location>
        <begin position="115"/>
        <end position="117"/>
    </location>
    <ligand>
        <name>NADP(+)</name>
        <dbReference type="ChEBI" id="CHEBI:58349"/>
    </ligand>
</feature>
<feature type="binding site" evidence="2">
    <location>
        <position position="117"/>
    </location>
    <ligand>
        <name>D-threo-isocitrate</name>
        <dbReference type="ChEBI" id="CHEBI:15562"/>
    </ligand>
</feature>
<feature type="binding site" evidence="1">
    <location>
        <position position="122"/>
    </location>
    <ligand>
        <name>NADP(+)</name>
        <dbReference type="ChEBI" id="CHEBI:58349"/>
    </ligand>
</feature>
<feature type="binding site" evidence="2">
    <location>
        <begin position="134"/>
        <end position="140"/>
    </location>
    <ligand>
        <name>D-threo-isocitrate</name>
        <dbReference type="ChEBI" id="CHEBI:15562"/>
    </ligand>
</feature>
<feature type="binding site" evidence="2">
    <location>
        <position position="149"/>
    </location>
    <ligand>
        <name>D-threo-isocitrate</name>
        <dbReference type="ChEBI" id="CHEBI:15562"/>
    </ligand>
</feature>
<feature type="binding site" evidence="2">
    <location>
        <position position="172"/>
    </location>
    <ligand>
        <name>D-threo-isocitrate</name>
        <dbReference type="ChEBI" id="CHEBI:15562"/>
    </ligand>
</feature>
<feature type="binding site" evidence="2">
    <location>
        <position position="291"/>
    </location>
    <ligand>
        <name>Mn(2+)</name>
        <dbReference type="ChEBI" id="CHEBI:29035"/>
    </ligand>
</feature>
<feature type="binding site" evidence="1">
    <location>
        <position position="299"/>
    </location>
    <ligand>
        <name>NADP(+)</name>
        <dbReference type="ChEBI" id="CHEBI:58349"/>
    </ligand>
</feature>
<feature type="binding site" evidence="2">
    <location>
        <position position="314"/>
    </location>
    <ligand>
        <name>Mn(2+)</name>
        <dbReference type="ChEBI" id="CHEBI:29035"/>
    </ligand>
</feature>
<feature type="binding site" evidence="1">
    <location>
        <begin position="349"/>
        <end position="354"/>
    </location>
    <ligand>
        <name>NADP(+)</name>
        <dbReference type="ChEBI" id="CHEBI:58349"/>
    </ligand>
</feature>
<feature type="binding site" evidence="1">
    <location>
        <position position="367"/>
    </location>
    <ligand>
        <name>NADP(+)</name>
        <dbReference type="ChEBI" id="CHEBI:58349"/>
    </ligand>
</feature>
<feature type="site" description="Critical for catalysis" evidence="2">
    <location>
        <position position="179"/>
    </location>
</feature>
<feature type="site" description="Critical for catalysis" evidence="2">
    <location>
        <position position="251"/>
    </location>
</feature>
<feature type="modified residue" description="N6-acetyllysine" evidence="9">
    <location>
        <position position="45"/>
    </location>
</feature>
<feature type="modified residue" description="N6-acetyllysine" evidence="9">
    <location>
        <position position="48"/>
    </location>
</feature>
<feature type="modified residue" description="N6-acetyllysine" evidence="3">
    <location>
        <position position="67"/>
    </location>
</feature>
<feature type="modified residue" description="N6-acetyllysine" evidence="9">
    <location>
        <position position="69"/>
    </location>
</feature>
<feature type="modified residue" description="N6-acetyllysine; alternate" evidence="9">
    <location>
        <position position="80"/>
    </location>
</feature>
<feature type="modified residue" description="N6-succinyllysine; alternate" evidence="10">
    <location>
        <position position="80"/>
    </location>
</feature>
<feature type="modified residue" description="N6-acetyllysine; alternate" evidence="9">
    <location>
        <position position="106"/>
    </location>
</feature>
<feature type="modified residue" description="N6-succinyllysine; alternate" evidence="10">
    <location>
        <position position="106"/>
    </location>
</feature>
<feature type="modified residue" description="N6-acetyllysine" evidence="9">
    <location>
        <position position="155"/>
    </location>
</feature>
<feature type="modified residue" description="N6-acetyllysine; alternate" evidence="9">
    <location>
        <position position="166"/>
    </location>
</feature>
<feature type="modified residue" description="N6-succinyllysine; alternate" evidence="10">
    <location>
        <position position="166"/>
    </location>
</feature>
<feature type="modified residue" description="N6-acetyllysine; alternate" evidence="9">
    <location>
        <position position="180"/>
    </location>
</feature>
<feature type="modified residue" description="N6-succinyllysine; alternate" evidence="10">
    <location>
        <position position="180"/>
    </location>
</feature>
<feature type="modified residue" description="N6-acetyllysine; alternate" evidence="9">
    <location>
        <position position="193"/>
    </location>
</feature>
<feature type="modified residue" description="N6-succinyllysine; alternate" evidence="10">
    <location>
        <position position="193"/>
    </location>
</feature>
<feature type="modified residue" description="N6-acetyllysine" evidence="9">
    <location>
        <position position="199"/>
    </location>
</feature>
<feature type="modified residue" description="N6-acetyllysine; alternate" evidence="9">
    <location>
        <position position="256"/>
    </location>
</feature>
<feature type="modified residue" description="N6-succinyllysine; alternate" evidence="10">
    <location>
        <position position="256"/>
    </location>
</feature>
<feature type="modified residue" description="N6-acetyllysine" evidence="9 10">
    <location>
        <position position="263"/>
    </location>
</feature>
<feature type="modified residue" description="N6-acetyllysine" evidence="9">
    <location>
        <position position="272"/>
    </location>
</feature>
<feature type="modified residue" description="N6-acetyllysine" evidence="3">
    <location>
        <position position="275"/>
    </location>
</feature>
<feature type="modified residue" description="N6-acetyllysine" evidence="9">
    <location>
        <position position="280"/>
    </location>
</feature>
<feature type="modified residue" description="N6-acetyllysine; alternate" evidence="9">
    <location>
        <position position="282"/>
    </location>
</feature>
<feature type="modified residue" description="N6-succinyllysine; alternate" evidence="10">
    <location>
        <position position="282"/>
    </location>
</feature>
<feature type="modified residue" description="N6-acetyllysine; alternate" evidence="9">
    <location>
        <position position="384"/>
    </location>
</feature>
<feature type="modified residue" description="N6-succinyllysine; alternate" evidence="10">
    <location>
        <position position="384"/>
    </location>
</feature>
<feature type="modified residue" description="N6-acetyllysine" evidence="9">
    <location>
        <position position="400"/>
    </location>
</feature>
<feature type="modified residue" description="N6-acetyllysine" evidence="3">
    <location>
        <position position="413"/>
    </location>
</feature>
<feature type="modified residue" description="N6-acetyllysine" evidence="9">
    <location>
        <position position="442"/>
    </location>
</feature>
<feature type="sequence conflict" description="In Ref. 1; AAC52473." evidence="7" ref="1">
    <original>T</original>
    <variation>A</variation>
    <location>
        <position position="104"/>
    </location>
</feature>
<feature type="sequence conflict" description="In Ref. 1; AAC52473." evidence="7" ref="1">
    <original>V</original>
    <variation>M</variation>
    <location>
        <position position="109"/>
    </location>
</feature>
<feature type="sequence conflict" description="In Ref. 1; AAC52473." evidence="7" ref="1">
    <original>I</original>
    <variation>S</variation>
    <location>
        <position position="152"/>
    </location>
</feature>
<feature type="sequence conflict" description="In Ref. 1; AAC52473." evidence="7" ref="1">
    <original>D</original>
    <variation>N</variation>
    <location>
        <position position="200"/>
    </location>
</feature>
<feature type="sequence conflict" description="In Ref. 1; AAC52473." evidence="7" ref="1">
    <original>A</original>
    <variation>G</variation>
    <location>
        <position position="214"/>
    </location>
</feature>
<feature type="sequence conflict" description="In Ref. 1; AAC52473 and 2; AAG43538." evidence="7" ref="1 2">
    <original>K</original>
    <variation>R</variation>
    <location>
        <position position="280"/>
    </location>
</feature>
<feature type="sequence conflict" description="In Ref. 1; AAC52473." evidence="7" ref="1">
    <original>QG</original>
    <variation>SR</variation>
    <location>
        <begin position="322"/>
        <end position="323"/>
    </location>
</feature>
<feature type="sequence conflict" description="In Ref. 1; AAC52473." evidence="7" ref="1">
    <original>NP</original>
    <variation>KG</variation>
    <location>
        <begin position="367"/>
        <end position="368"/>
    </location>
</feature>
<feature type="sequence conflict" description="In Ref. 1; AAC52473." evidence="7" ref="1">
    <original>L</original>
    <variation>R</variation>
    <location>
        <position position="398"/>
    </location>
</feature>
<feature type="sequence conflict" description="In Ref. 1; AAC52473." evidence="7" ref="1">
    <location>
        <position position="408"/>
    </location>
</feature>
<feature type="strand" evidence="11">
    <location>
        <begin position="50"/>
        <end position="54"/>
    </location>
</feature>
<feature type="helix" evidence="11">
    <location>
        <begin position="57"/>
        <end position="69"/>
    </location>
</feature>
<feature type="turn" evidence="11">
    <location>
        <begin position="70"/>
        <end position="74"/>
    </location>
</feature>
<feature type="strand" evidence="11">
    <location>
        <begin position="79"/>
        <end position="83"/>
    </location>
</feature>
<feature type="helix" evidence="11">
    <location>
        <begin position="86"/>
        <end position="91"/>
    </location>
</feature>
<feature type="turn" evidence="11">
    <location>
        <begin position="92"/>
        <end position="94"/>
    </location>
</feature>
<feature type="helix" evidence="11">
    <location>
        <begin position="95"/>
        <end position="107"/>
    </location>
</feature>
<feature type="strand" evidence="11">
    <location>
        <begin position="108"/>
        <end position="112"/>
    </location>
</feature>
<feature type="helix" evidence="11">
    <location>
        <begin position="120"/>
        <end position="126"/>
    </location>
</feature>
<feature type="helix" evidence="11">
    <location>
        <begin position="135"/>
        <end position="143"/>
    </location>
</feature>
<feature type="strand" evidence="11">
    <location>
        <begin position="145"/>
        <end position="151"/>
    </location>
</feature>
<feature type="strand" evidence="11">
    <location>
        <begin position="169"/>
        <end position="173"/>
    </location>
</feature>
<feature type="helix" evidence="11">
    <location>
        <begin position="177"/>
        <end position="180"/>
    </location>
</feature>
<feature type="strand" evidence="11">
    <location>
        <begin position="182"/>
        <end position="186"/>
    </location>
</feature>
<feature type="strand" evidence="11">
    <location>
        <begin position="188"/>
        <end position="201"/>
    </location>
</feature>
<feature type="strand" evidence="11">
    <location>
        <begin position="205"/>
        <end position="214"/>
    </location>
</feature>
<feature type="strand" evidence="11">
    <location>
        <begin position="216"/>
        <end position="224"/>
    </location>
</feature>
<feature type="helix" evidence="11">
    <location>
        <begin position="225"/>
        <end position="242"/>
    </location>
</feature>
<feature type="strand" evidence="11">
    <location>
        <begin position="246"/>
        <end position="250"/>
    </location>
</feature>
<feature type="turn" evidence="11">
    <location>
        <begin position="252"/>
        <end position="254"/>
    </location>
</feature>
<feature type="helix" evidence="11">
    <location>
        <begin position="258"/>
        <end position="273"/>
    </location>
</feature>
<feature type="helix" evidence="11">
    <location>
        <begin position="275"/>
        <end position="280"/>
    </location>
</feature>
<feature type="strand" evidence="11">
    <location>
        <begin position="285"/>
        <end position="289"/>
    </location>
</feature>
<feature type="helix" evidence="11">
    <location>
        <begin position="290"/>
        <end position="299"/>
    </location>
</feature>
<feature type="strand" evidence="11">
    <location>
        <begin position="305"/>
        <end position="308"/>
    </location>
</feature>
<feature type="helix" evidence="11">
    <location>
        <begin position="310"/>
        <end position="324"/>
    </location>
</feature>
<feature type="strand" evidence="11">
    <location>
        <begin position="329"/>
        <end position="335"/>
    </location>
</feature>
<feature type="strand" evidence="11">
    <location>
        <begin position="342"/>
        <end position="345"/>
    </location>
</feature>
<feature type="helix" evidence="11">
    <location>
        <begin position="352"/>
        <end position="359"/>
    </location>
</feature>
<feature type="helix" evidence="11">
    <location>
        <begin position="369"/>
        <end position="386"/>
    </location>
</feature>
<feature type="helix" evidence="11">
    <location>
        <begin position="389"/>
        <end position="407"/>
    </location>
</feature>
<feature type="helix" evidence="11">
    <location>
        <begin position="413"/>
        <end position="420"/>
    </location>
</feature>
<feature type="helix" evidence="11">
    <location>
        <begin position="422"/>
        <end position="424"/>
    </location>
</feature>
<feature type="turn" evidence="11">
    <location>
        <begin position="427"/>
        <end position="429"/>
    </location>
</feature>
<feature type="helix" evidence="11">
    <location>
        <begin position="434"/>
        <end position="449"/>
    </location>
</feature>